<proteinExistence type="inferred from homology"/>
<keyword id="KW-0067">ATP-binding</keyword>
<keyword id="KW-0315">Glutamine amidotransferase</keyword>
<keyword id="KW-0332">GMP biosynthesis</keyword>
<keyword id="KW-0436">Ligase</keyword>
<keyword id="KW-0547">Nucleotide-binding</keyword>
<keyword id="KW-0658">Purine biosynthesis</keyword>
<keyword id="KW-1185">Reference proteome</keyword>
<protein>
    <recommendedName>
        <fullName evidence="1">GMP synthase [glutamine-hydrolyzing]</fullName>
        <ecNumber evidence="1">6.3.5.2</ecNumber>
    </recommendedName>
    <alternativeName>
        <fullName evidence="1">GMP synthetase</fullName>
    </alternativeName>
    <alternativeName>
        <fullName evidence="1">Glutamine amidotransferase</fullName>
    </alternativeName>
</protein>
<reference key="1">
    <citation type="submission" date="2006-02" db="EMBL/GenBank/DDBJ databases">
        <title>Complete sequence of chromosome of Rhodoferax ferrireducens DSM 15236.</title>
        <authorList>
            <person name="Copeland A."/>
            <person name="Lucas S."/>
            <person name="Lapidus A."/>
            <person name="Barry K."/>
            <person name="Detter J.C."/>
            <person name="Glavina del Rio T."/>
            <person name="Hammon N."/>
            <person name="Israni S."/>
            <person name="Pitluck S."/>
            <person name="Brettin T."/>
            <person name="Bruce D."/>
            <person name="Han C."/>
            <person name="Tapia R."/>
            <person name="Gilna P."/>
            <person name="Kiss H."/>
            <person name="Schmutz J."/>
            <person name="Larimer F."/>
            <person name="Land M."/>
            <person name="Kyrpides N."/>
            <person name="Ivanova N."/>
            <person name="Richardson P."/>
        </authorList>
    </citation>
    <scope>NUCLEOTIDE SEQUENCE [LARGE SCALE GENOMIC DNA]</scope>
    <source>
        <strain>ATCC BAA-621 / DSM 15236 / T118</strain>
    </source>
</reference>
<evidence type="ECO:0000255" key="1">
    <source>
        <dbReference type="HAMAP-Rule" id="MF_00344"/>
    </source>
</evidence>
<comment type="function">
    <text evidence="1">Catalyzes the synthesis of GMP from XMP.</text>
</comment>
<comment type="catalytic activity">
    <reaction evidence="1">
        <text>XMP + L-glutamine + ATP + H2O = GMP + L-glutamate + AMP + diphosphate + 2 H(+)</text>
        <dbReference type="Rhea" id="RHEA:11680"/>
        <dbReference type="ChEBI" id="CHEBI:15377"/>
        <dbReference type="ChEBI" id="CHEBI:15378"/>
        <dbReference type="ChEBI" id="CHEBI:29985"/>
        <dbReference type="ChEBI" id="CHEBI:30616"/>
        <dbReference type="ChEBI" id="CHEBI:33019"/>
        <dbReference type="ChEBI" id="CHEBI:57464"/>
        <dbReference type="ChEBI" id="CHEBI:58115"/>
        <dbReference type="ChEBI" id="CHEBI:58359"/>
        <dbReference type="ChEBI" id="CHEBI:456215"/>
        <dbReference type="EC" id="6.3.5.2"/>
    </reaction>
</comment>
<comment type="pathway">
    <text evidence="1">Purine metabolism; GMP biosynthesis; GMP from XMP (L-Gln route): step 1/1.</text>
</comment>
<comment type="subunit">
    <text evidence="1">Homodimer.</text>
</comment>
<dbReference type="EC" id="6.3.5.2" evidence="1"/>
<dbReference type="EMBL" id="CP000267">
    <property type="protein sequence ID" value="ABD70005.1"/>
    <property type="molecule type" value="Genomic_DNA"/>
</dbReference>
<dbReference type="RefSeq" id="WP_011464573.1">
    <property type="nucleotide sequence ID" value="NC_007908.1"/>
</dbReference>
<dbReference type="SMR" id="Q21W48"/>
<dbReference type="STRING" id="338969.Rfer_2287"/>
<dbReference type="MEROPS" id="C26.957"/>
<dbReference type="KEGG" id="rfr:Rfer_2287"/>
<dbReference type="eggNOG" id="COG0518">
    <property type="taxonomic scope" value="Bacteria"/>
</dbReference>
<dbReference type="eggNOG" id="COG0519">
    <property type="taxonomic scope" value="Bacteria"/>
</dbReference>
<dbReference type="HOGENOM" id="CLU_014340_0_5_4"/>
<dbReference type="OrthoDB" id="9802219at2"/>
<dbReference type="UniPathway" id="UPA00189">
    <property type="reaction ID" value="UER00296"/>
</dbReference>
<dbReference type="Proteomes" id="UP000008332">
    <property type="component" value="Chromosome"/>
</dbReference>
<dbReference type="GO" id="GO:0005829">
    <property type="term" value="C:cytosol"/>
    <property type="evidence" value="ECO:0007669"/>
    <property type="project" value="TreeGrafter"/>
</dbReference>
<dbReference type="GO" id="GO:0005524">
    <property type="term" value="F:ATP binding"/>
    <property type="evidence" value="ECO:0007669"/>
    <property type="project" value="UniProtKB-UniRule"/>
</dbReference>
<dbReference type="GO" id="GO:0003921">
    <property type="term" value="F:GMP synthase activity"/>
    <property type="evidence" value="ECO:0007669"/>
    <property type="project" value="InterPro"/>
</dbReference>
<dbReference type="CDD" id="cd01742">
    <property type="entry name" value="GATase1_GMP_Synthase"/>
    <property type="match status" value="1"/>
</dbReference>
<dbReference type="CDD" id="cd01997">
    <property type="entry name" value="GMP_synthase_C"/>
    <property type="match status" value="1"/>
</dbReference>
<dbReference type="FunFam" id="3.30.300.10:FF:000002">
    <property type="entry name" value="GMP synthase [glutamine-hydrolyzing]"/>
    <property type="match status" value="1"/>
</dbReference>
<dbReference type="FunFam" id="3.40.50.620:FF:000001">
    <property type="entry name" value="GMP synthase [glutamine-hydrolyzing]"/>
    <property type="match status" value="1"/>
</dbReference>
<dbReference type="FunFam" id="3.40.50.880:FF:000001">
    <property type="entry name" value="GMP synthase [glutamine-hydrolyzing]"/>
    <property type="match status" value="1"/>
</dbReference>
<dbReference type="Gene3D" id="3.30.300.10">
    <property type="match status" value="1"/>
</dbReference>
<dbReference type="Gene3D" id="3.40.50.880">
    <property type="match status" value="1"/>
</dbReference>
<dbReference type="Gene3D" id="3.40.50.620">
    <property type="entry name" value="HUPs"/>
    <property type="match status" value="1"/>
</dbReference>
<dbReference type="HAMAP" id="MF_00344">
    <property type="entry name" value="GMP_synthase"/>
    <property type="match status" value="1"/>
</dbReference>
<dbReference type="InterPro" id="IPR029062">
    <property type="entry name" value="Class_I_gatase-like"/>
</dbReference>
<dbReference type="InterPro" id="IPR017926">
    <property type="entry name" value="GATASE"/>
</dbReference>
<dbReference type="InterPro" id="IPR001674">
    <property type="entry name" value="GMP_synth_C"/>
</dbReference>
<dbReference type="InterPro" id="IPR004739">
    <property type="entry name" value="GMP_synth_GATase"/>
</dbReference>
<dbReference type="InterPro" id="IPR022955">
    <property type="entry name" value="GMP_synthase"/>
</dbReference>
<dbReference type="InterPro" id="IPR025777">
    <property type="entry name" value="GMPS_ATP_PPase_dom"/>
</dbReference>
<dbReference type="InterPro" id="IPR022310">
    <property type="entry name" value="NAD/GMP_synthase"/>
</dbReference>
<dbReference type="InterPro" id="IPR014729">
    <property type="entry name" value="Rossmann-like_a/b/a_fold"/>
</dbReference>
<dbReference type="NCBIfam" id="TIGR00884">
    <property type="entry name" value="guaA_Cterm"/>
    <property type="match status" value="1"/>
</dbReference>
<dbReference type="NCBIfam" id="TIGR00888">
    <property type="entry name" value="guaA_Nterm"/>
    <property type="match status" value="1"/>
</dbReference>
<dbReference type="NCBIfam" id="NF000848">
    <property type="entry name" value="PRK00074.1"/>
    <property type="match status" value="1"/>
</dbReference>
<dbReference type="PANTHER" id="PTHR11922:SF2">
    <property type="entry name" value="GMP SYNTHASE [GLUTAMINE-HYDROLYZING]"/>
    <property type="match status" value="1"/>
</dbReference>
<dbReference type="PANTHER" id="PTHR11922">
    <property type="entry name" value="GMP SYNTHASE-RELATED"/>
    <property type="match status" value="1"/>
</dbReference>
<dbReference type="Pfam" id="PF00117">
    <property type="entry name" value="GATase"/>
    <property type="match status" value="1"/>
</dbReference>
<dbReference type="Pfam" id="PF00958">
    <property type="entry name" value="GMP_synt_C"/>
    <property type="match status" value="1"/>
</dbReference>
<dbReference type="Pfam" id="PF02540">
    <property type="entry name" value="NAD_synthase"/>
    <property type="match status" value="1"/>
</dbReference>
<dbReference type="PRINTS" id="PR00096">
    <property type="entry name" value="GATASE"/>
</dbReference>
<dbReference type="SUPFAM" id="SSF52402">
    <property type="entry name" value="Adenine nucleotide alpha hydrolases-like"/>
    <property type="match status" value="1"/>
</dbReference>
<dbReference type="SUPFAM" id="SSF52317">
    <property type="entry name" value="Class I glutamine amidotransferase-like"/>
    <property type="match status" value="1"/>
</dbReference>
<dbReference type="SUPFAM" id="SSF54810">
    <property type="entry name" value="GMP synthetase C-terminal dimerisation domain"/>
    <property type="match status" value="1"/>
</dbReference>
<dbReference type="PROSITE" id="PS51273">
    <property type="entry name" value="GATASE_TYPE_1"/>
    <property type="match status" value="1"/>
</dbReference>
<dbReference type="PROSITE" id="PS51553">
    <property type="entry name" value="GMPS_ATP_PPASE"/>
    <property type="match status" value="1"/>
</dbReference>
<sequence>MHQKILILDFGSQVTQLIARRIREAHVFCEVHPCDVTDDWVRAYARDGKLKGVILSGSHASVYEETTDKAPPAVFELGVPVLGICYGMQTMAHQLGGIVTSGHQREFGPADVRAHGHTALLEGIQDYKTAAGHGMLQVWMSHGDKVTELPHGFKLMASTDSCPIAGMADETRRFYGVQFHPEVTHTKRGAAILERFVLDICGARADWIMGDYISEAVEQIRAQVGTDEVILGLSGGVDSSVAAALIHRAIGEQLTCVFVDHGLLRLNEGDLVMEMFVGKLHAKVIRVDAADQFLGQLAGVSDPEAKRKIIGREFVEVFKAEAAKLKSDQSRHVAWLAQGTIYPDVIESGGAKNKKAVVIKSHHNVGGLPELLGLKLLEPLRELFKDEVRELGVALGLPYHMVYRHPFPGPGLGVRILGEVKKDYADLLRRADAIFIDELHNFIDEASGKSWYDLTSQAFAVFLPVKSVGVMGDGRTYDYVVALRAVQTSDFMTADWAELPYALLKKVSSRIINEVRGINRVTYDVSSKPPATIEWE</sequence>
<organism>
    <name type="scientific">Albidiferax ferrireducens (strain ATCC BAA-621 / DSM 15236 / T118)</name>
    <name type="common">Rhodoferax ferrireducens</name>
    <dbReference type="NCBI Taxonomy" id="338969"/>
    <lineage>
        <taxon>Bacteria</taxon>
        <taxon>Pseudomonadati</taxon>
        <taxon>Pseudomonadota</taxon>
        <taxon>Betaproteobacteria</taxon>
        <taxon>Burkholderiales</taxon>
        <taxon>Comamonadaceae</taxon>
        <taxon>Rhodoferax</taxon>
    </lineage>
</organism>
<accession>Q21W48</accession>
<gene>
    <name evidence="1" type="primary">guaA</name>
    <name type="ordered locus">Rfer_2287</name>
</gene>
<name>GUAA_ALBFT</name>
<feature type="chain" id="PRO_1000120380" description="GMP synthase [glutamine-hydrolyzing]">
    <location>
        <begin position="1"/>
        <end position="536"/>
    </location>
</feature>
<feature type="domain" description="Glutamine amidotransferase type-1" evidence="1">
    <location>
        <begin position="4"/>
        <end position="206"/>
    </location>
</feature>
<feature type="domain" description="GMPS ATP-PPase" evidence="1">
    <location>
        <begin position="207"/>
        <end position="404"/>
    </location>
</feature>
<feature type="active site" description="Nucleophile" evidence="1">
    <location>
        <position position="85"/>
    </location>
</feature>
<feature type="active site" evidence="1">
    <location>
        <position position="180"/>
    </location>
</feature>
<feature type="active site" evidence="1">
    <location>
        <position position="182"/>
    </location>
</feature>
<feature type="binding site" evidence="1">
    <location>
        <begin position="234"/>
        <end position="240"/>
    </location>
    <ligand>
        <name>ATP</name>
        <dbReference type="ChEBI" id="CHEBI:30616"/>
    </ligand>
</feature>